<proteinExistence type="evidence at protein level"/>
<name>RPA1_RAT</name>
<organism>
    <name type="scientific">Rattus norvegicus</name>
    <name type="common">Rat</name>
    <dbReference type="NCBI Taxonomy" id="10116"/>
    <lineage>
        <taxon>Eukaryota</taxon>
        <taxon>Metazoa</taxon>
        <taxon>Chordata</taxon>
        <taxon>Craniata</taxon>
        <taxon>Vertebrata</taxon>
        <taxon>Euteleostomi</taxon>
        <taxon>Mammalia</taxon>
        <taxon>Eutheria</taxon>
        <taxon>Euarchontoglires</taxon>
        <taxon>Glires</taxon>
        <taxon>Rodentia</taxon>
        <taxon>Myomorpha</taxon>
        <taxon>Muroidea</taxon>
        <taxon>Muridae</taxon>
        <taxon>Murinae</taxon>
        <taxon>Rattus</taxon>
    </lineage>
</organism>
<dbReference type="EC" id="2.7.7.6" evidence="3"/>
<dbReference type="EMBL" id="AF025425">
    <property type="protein sequence ID" value="AAB94601.1"/>
    <property type="molecule type" value="mRNA"/>
</dbReference>
<dbReference type="PIR" id="T14103">
    <property type="entry name" value="T14103"/>
</dbReference>
<dbReference type="RefSeq" id="NP_113960.1">
    <property type="nucleotide sequence ID" value="NM_031772.1"/>
</dbReference>
<dbReference type="SMR" id="O54889"/>
<dbReference type="FunCoup" id="O54889">
    <property type="interactions" value="3033"/>
</dbReference>
<dbReference type="IntAct" id="O54889">
    <property type="interactions" value="3"/>
</dbReference>
<dbReference type="MINT" id="O54889"/>
<dbReference type="STRING" id="10116.ENSRNOP00000013587"/>
<dbReference type="GlyGen" id="O54889">
    <property type="glycosylation" value="1 site"/>
</dbReference>
<dbReference type="PhosphoSitePlus" id="O54889"/>
<dbReference type="PaxDb" id="10116-ENSRNOP00000013587"/>
<dbReference type="GeneID" id="83581"/>
<dbReference type="KEGG" id="rno:83581"/>
<dbReference type="UCSC" id="RGD:620824">
    <property type="organism name" value="rat"/>
</dbReference>
<dbReference type="AGR" id="RGD:620824"/>
<dbReference type="CTD" id="25885"/>
<dbReference type="RGD" id="620824">
    <property type="gene designation" value="Polr1a"/>
</dbReference>
<dbReference type="eggNOG" id="KOG0262">
    <property type="taxonomic scope" value="Eukaryota"/>
</dbReference>
<dbReference type="InParanoid" id="O54889"/>
<dbReference type="PhylomeDB" id="O54889"/>
<dbReference type="Reactome" id="R-RNO-5250924">
    <property type="pathway name" value="B-WICH complex positively regulates rRNA expression"/>
</dbReference>
<dbReference type="Reactome" id="R-RNO-73762">
    <property type="pathway name" value="RNA Polymerase I Transcription Initiation"/>
</dbReference>
<dbReference type="Reactome" id="R-RNO-73772">
    <property type="pathway name" value="RNA Polymerase I Promoter Escape"/>
</dbReference>
<dbReference type="Reactome" id="R-RNO-73863">
    <property type="pathway name" value="RNA Polymerase I Transcription Termination"/>
</dbReference>
<dbReference type="PRO" id="PR:O54889"/>
<dbReference type="Proteomes" id="UP000002494">
    <property type="component" value="Unplaced"/>
</dbReference>
<dbReference type="GO" id="GO:0005694">
    <property type="term" value="C:chromosome"/>
    <property type="evidence" value="ECO:0000250"/>
    <property type="project" value="UniProtKB"/>
</dbReference>
<dbReference type="GO" id="GO:0005739">
    <property type="term" value="C:mitochondrion"/>
    <property type="evidence" value="ECO:0007669"/>
    <property type="project" value="GOC"/>
</dbReference>
<dbReference type="GO" id="GO:0005634">
    <property type="term" value="C:nucleus"/>
    <property type="evidence" value="ECO:0000266"/>
    <property type="project" value="RGD"/>
</dbReference>
<dbReference type="GO" id="GO:0005736">
    <property type="term" value="C:RNA polymerase I complex"/>
    <property type="evidence" value="ECO:0000314"/>
    <property type="project" value="RGD"/>
</dbReference>
<dbReference type="GO" id="GO:0003682">
    <property type="term" value="F:chromatin binding"/>
    <property type="evidence" value="ECO:0000250"/>
    <property type="project" value="UniProtKB"/>
</dbReference>
<dbReference type="GO" id="GO:0003677">
    <property type="term" value="F:DNA binding"/>
    <property type="evidence" value="ECO:0007669"/>
    <property type="project" value="InterPro"/>
</dbReference>
<dbReference type="GO" id="GO:0003899">
    <property type="term" value="F:DNA-directed RNA polymerase activity"/>
    <property type="evidence" value="ECO:0000266"/>
    <property type="project" value="RGD"/>
</dbReference>
<dbReference type="GO" id="GO:0071667">
    <property type="term" value="F:DNA/RNA hybrid binding"/>
    <property type="evidence" value="ECO:0000266"/>
    <property type="project" value="RGD"/>
</dbReference>
<dbReference type="GO" id="GO:0000287">
    <property type="term" value="F:magnesium ion binding"/>
    <property type="evidence" value="ECO:0000266"/>
    <property type="project" value="RGD"/>
</dbReference>
<dbReference type="GO" id="GO:0008270">
    <property type="term" value="F:zinc ion binding"/>
    <property type="evidence" value="ECO:0000266"/>
    <property type="project" value="RGD"/>
</dbReference>
<dbReference type="GO" id="GO:1904750">
    <property type="term" value="P:negative regulation of protein localization to nucleolus"/>
    <property type="evidence" value="ECO:0000266"/>
    <property type="project" value="RGD"/>
</dbReference>
<dbReference type="GO" id="GO:0009303">
    <property type="term" value="P:rRNA transcription"/>
    <property type="evidence" value="ECO:0000314"/>
    <property type="project" value="RGD"/>
</dbReference>
<dbReference type="CDD" id="cd00084">
    <property type="entry name" value="HMG-box_SF"/>
    <property type="match status" value="1"/>
</dbReference>
<dbReference type="CDD" id="cd02735">
    <property type="entry name" value="RNAP_I_Rpa1_C"/>
    <property type="match status" value="1"/>
</dbReference>
<dbReference type="CDD" id="cd01435">
    <property type="entry name" value="RNAP_I_RPA1_N"/>
    <property type="match status" value="1"/>
</dbReference>
<dbReference type="FunFam" id="2.40.40.20:FF:000019">
    <property type="entry name" value="DNA-directed RNA polymerase II subunit RPB1"/>
    <property type="match status" value="1"/>
</dbReference>
<dbReference type="FunFam" id="1.10.132.30:FF:000004">
    <property type="entry name" value="DNA-directed RNA polymerase subunit"/>
    <property type="match status" value="1"/>
</dbReference>
<dbReference type="FunFam" id="1.10.274.100:FF:000004">
    <property type="entry name" value="DNA-directed RNA polymerase subunit"/>
    <property type="match status" value="1"/>
</dbReference>
<dbReference type="FunFam" id="3.30.1490.180:FF:000003">
    <property type="entry name" value="DNA-directed RNA polymerase subunit"/>
    <property type="match status" value="1"/>
</dbReference>
<dbReference type="FunFam" id="4.10.860.120:FF:000006">
    <property type="entry name" value="DNA-directed RNA polymerase subunit"/>
    <property type="match status" value="1"/>
</dbReference>
<dbReference type="Gene3D" id="1.10.132.30">
    <property type="match status" value="1"/>
</dbReference>
<dbReference type="Gene3D" id="1.10.357.120">
    <property type="match status" value="1"/>
</dbReference>
<dbReference type="Gene3D" id="2.40.40.20">
    <property type="match status" value="1"/>
</dbReference>
<dbReference type="Gene3D" id="3.30.70.2850">
    <property type="match status" value="1"/>
</dbReference>
<dbReference type="Gene3D" id="6.10.250.2940">
    <property type="match status" value="1"/>
</dbReference>
<dbReference type="Gene3D" id="3.30.1490.180">
    <property type="entry name" value="RNA polymerase ii"/>
    <property type="match status" value="1"/>
</dbReference>
<dbReference type="Gene3D" id="4.10.860.120">
    <property type="entry name" value="RNA polymerase II, clamp domain"/>
    <property type="match status" value="1"/>
</dbReference>
<dbReference type="Gene3D" id="1.10.274.100">
    <property type="entry name" value="RNA polymerase Rpb1, domain 3"/>
    <property type="match status" value="1"/>
</dbReference>
<dbReference type="InterPro" id="IPR047107">
    <property type="entry name" value="DNA-dir_RNA_pol1_lsu_C"/>
</dbReference>
<dbReference type="InterPro" id="IPR015699">
    <property type="entry name" value="DNA-dir_RNA_pol1_lsu_N"/>
</dbReference>
<dbReference type="InterPro" id="IPR045867">
    <property type="entry name" value="DNA-dir_RpoC_beta_prime"/>
</dbReference>
<dbReference type="InterPro" id="IPR000722">
    <property type="entry name" value="RNA_pol_asu"/>
</dbReference>
<dbReference type="InterPro" id="IPR006592">
    <property type="entry name" value="RNA_pol_N"/>
</dbReference>
<dbReference type="InterPro" id="IPR007080">
    <property type="entry name" value="RNA_pol_Rpb1_1"/>
</dbReference>
<dbReference type="InterPro" id="IPR007066">
    <property type="entry name" value="RNA_pol_Rpb1_3"/>
</dbReference>
<dbReference type="InterPro" id="IPR042102">
    <property type="entry name" value="RNA_pol_Rpb1_3_sf"/>
</dbReference>
<dbReference type="InterPro" id="IPR007083">
    <property type="entry name" value="RNA_pol_Rpb1_4"/>
</dbReference>
<dbReference type="InterPro" id="IPR007081">
    <property type="entry name" value="RNA_pol_Rpb1_5"/>
</dbReference>
<dbReference type="InterPro" id="IPR044893">
    <property type="entry name" value="RNA_pol_Rpb1_clamp_domain"/>
</dbReference>
<dbReference type="InterPro" id="IPR038120">
    <property type="entry name" value="Rpb1_funnel_sf"/>
</dbReference>
<dbReference type="PANTHER" id="PTHR19376">
    <property type="entry name" value="DNA-DIRECTED RNA POLYMERASE"/>
    <property type="match status" value="1"/>
</dbReference>
<dbReference type="PANTHER" id="PTHR19376:SF11">
    <property type="entry name" value="DNA-DIRECTED RNA POLYMERASE I SUBUNIT RPA1"/>
    <property type="match status" value="1"/>
</dbReference>
<dbReference type="Pfam" id="PF04997">
    <property type="entry name" value="RNA_pol_Rpb1_1"/>
    <property type="match status" value="1"/>
</dbReference>
<dbReference type="Pfam" id="PF00623">
    <property type="entry name" value="RNA_pol_Rpb1_2"/>
    <property type="match status" value="1"/>
</dbReference>
<dbReference type="Pfam" id="PF04983">
    <property type="entry name" value="RNA_pol_Rpb1_3"/>
    <property type="match status" value="1"/>
</dbReference>
<dbReference type="Pfam" id="PF05000">
    <property type="entry name" value="RNA_pol_Rpb1_4"/>
    <property type="match status" value="1"/>
</dbReference>
<dbReference type="Pfam" id="PF04998">
    <property type="entry name" value="RNA_pol_Rpb1_5"/>
    <property type="match status" value="1"/>
</dbReference>
<dbReference type="SMART" id="SM00663">
    <property type="entry name" value="RPOLA_N"/>
    <property type="match status" value="1"/>
</dbReference>
<dbReference type="SUPFAM" id="SSF64484">
    <property type="entry name" value="beta and beta-prime subunits of DNA dependent RNA-polymerase"/>
    <property type="match status" value="1"/>
</dbReference>
<gene>
    <name evidence="11" type="primary">Polr1a</name>
    <name type="synonym">Rpa1</name>
    <name type="synonym">Rpo1-4</name>
</gene>
<reference key="1">
    <citation type="journal article" date="1998" name="J. Biol. Chem.">
        <title>Affinity purification of mammalian RNA polymerase I. Identification of an associated kinase.</title>
        <authorList>
            <person name="Hannan R.D."/>
            <person name="Hempel W.M."/>
            <person name="Cavanaugh A."/>
            <person name="Arino T."/>
            <person name="Dimitrov S.I."/>
            <person name="Moss T."/>
            <person name="Rothblum L."/>
        </authorList>
    </citation>
    <scope>NUCLEOTIDE SEQUENCE [MRNA]</scope>
    <scope>IDENTIFICATION IN THE RNA POL I COMPLEX</scope>
    <scope>PHOSPHORYLATION</scope>
</reference>
<accession>O54889</accession>
<feature type="chain" id="PRO_0000073925" description="DNA-directed RNA polymerase I subunit RPA1">
    <location>
        <begin position="1"/>
        <end position="1716"/>
    </location>
</feature>
<feature type="region of interest" description="Clamp" evidence="3">
    <location>
        <begin position="110"/>
        <end position="201"/>
    </location>
</feature>
<feature type="region of interest" description="Clamp" evidence="3">
    <location>
        <begin position="327"/>
        <end position="433"/>
    </location>
</feature>
<feature type="region of interest" description="Rudder" evidence="3">
    <location>
        <begin position="410"/>
        <end position="423"/>
    </location>
</feature>
<feature type="region of interest" description="Involved in RRN3 binding to Pol I complex" evidence="3">
    <location>
        <begin position="475"/>
        <end position="549"/>
    </location>
</feature>
<feature type="region of interest" description="Funnel" evidence="3">
    <location>
        <begin position="812"/>
        <end position="890"/>
    </location>
</feature>
<feature type="region of interest" description="Bridging helix" evidence="1 3">
    <location>
        <begin position="967"/>
        <end position="1008"/>
    </location>
</feature>
<feature type="region of interest" description="Mediates the interaction with TOP2A" evidence="3">
    <location>
        <begin position="1067"/>
        <end position="1162"/>
    </location>
</feature>
<feature type="region of interest" description="Trigger loop" evidence="1">
    <location>
        <begin position="1214"/>
        <end position="1255"/>
    </location>
</feature>
<feature type="region of interest" description="Disordered" evidence="7">
    <location>
        <begin position="1368"/>
        <end position="1493"/>
    </location>
</feature>
<feature type="compositionally biased region" description="Basic and acidic residues" evidence="7">
    <location>
        <begin position="1380"/>
        <end position="1397"/>
    </location>
</feature>
<feature type="compositionally biased region" description="Acidic residues" evidence="7">
    <location>
        <begin position="1398"/>
        <end position="1419"/>
    </location>
</feature>
<feature type="compositionally biased region" description="Acidic residues" evidence="7">
    <location>
        <begin position="1429"/>
        <end position="1451"/>
    </location>
</feature>
<feature type="compositionally biased region" description="Basic and acidic residues" evidence="7">
    <location>
        <begin position="1452"/>
        <end position="1464"/>
    </location>
</feature>
<feature type="compositionally biased region" description="Acidic residues" evidence="7">
    <location>
        <begin position="1465"/>
        <end position="1477"/>
    </location>
</feature>
<feature type="binding site" evidence="3">
    <location>
        <position position="64"/>
    </location>
    <ligand>
        <name>Zn(2+)</name>
        <dbReference type="ChEBI" id="CHEBI:29105"/>
        <label>1</label>
    </ligand>
</feature>
<feature type="binding site" evidence="3">
    <location>
        <position position="67"/>
    </location>
    <ligand>
        <name>Zn(2+)</name>
        <dbReference type="ChEBI" id="CHEBI:29105"/>
        <label>1</label>
    </ligand>
</feature>
<feature type="binding site" evidence="3">
    <location>
        <position position="74"/>
    </location>
    <ligand>
        <name>Zn(2+)</name>
        <dbReference type="ChEBI" id="CHEBI:29105"/>
        <label>1</label>
    </ligand>
</feature>
<feature type="binding site" evidence="3">
    <location>
        <position position="77"/>
    </location>
    <ligand>
        <name>Zn(2+)</name>
        <dbReference type="ChEBI" id="CHEBI:29105"/>
        <label>1</label>
    </ligand>
</feature>
<feature type="binding site" evidence="3">
    <location>
        <position position="104"/>
    </location>
    <ligand>
        <name>Zn(2+)</name>
        <dbReference type="ChEBI" id="CHEBI:29105"/>
        <label>2</label>
    </ligand>
</feature>
<feature type="binding site" evidence="3">
    <location>
        <position position="107"/>
    </location>
    <ligand>
        <name>Zn(2+)</name>
        <dbReference type="ChEBI" id="CHEBI:29105"/>
        <label>2</label>
    </ligand>
</feature>
<feature type="binding site" evidence="3">
    <location>
        <position position="205"/>
    </location>
    <ligand>
        <name>Zn(2+)</name>
        <dbReference type="ChEBI" id="CHEBI:29105"/>
        <label>2</label>
    </ligand>
</feature>
<feature type="binding site" evidence="3">
    <location>
        <position position="208"/>
    </location>
    <ligand>
        <name>Zn(2+)</name>
        <dbReference type="ChEBI" id="CHEBI:29105"/>
        <label>2</label>
    </ligand>
</feature>
<feature type="binding site" evidence="3">
    <location>
        <position position="431"/>
    </location>
    <ligand>
        <name>DNA</name>
        <dbReference type="ChEBI" id="CHEBI:16991"/>
        <label>template strand</label>
    </ligand>
</feature>
<feature type="binding site" evidence="3">
    <location>
        <position position="436"/>
    </location>
    <ligand>
        <name>DNA</name>
        <dbReference type="ChEBI" id="CHEBI:16991"/>
        <label>nontemplate strand</label>
    </ligand>
</feature>
<feature type="binding site" evidence="3">
    <location>
        <position position="436"/>
    </location>
    <ligand>
        <name>DNA</name>
        <dbReference type="ChEBI" id="CHEBI:16991"/>
        <label>template strand</label>
    </ligand>
</feature>
<feature type="binding site" evidence="3">
    <location>
        <position position="443"/>
    </location>
    <ligand>
        <name>DNA</name>
        <dbReference type="ChEBI" id="CHEBI:16991"/>
        <label>template strand</label>
    </ligand>
</feature>
<feature type="binding site" evidence="3">
    <location>
        <position position="559"/>
    </location>
    <ligand>
        <name>RNA</name>
        <dbReference type="ChEBI" id="CHEBI:33697"/>
    </ligand>
</feature>
<feature type="binding site" evidence="3">
    <location>
        <position position="595"/>
    </location>
    <ligand>
        <name>Mg(2+)</name>
        <dbReference type="ChEBI" id="CHEBI:18420"/>
        <label>1</label>
        <note>catalytic</note>
    </ligand>
</feature>
<feature type="binding site" evidence="6">
    <location>
        <position position="595"/>
    </location>
    <ligand>
        <name>Mg(2+)</name>
        <dbReference type="ChEBI" id="CHEBI:18420"/>
        <label>2</label>
        <note>ligand shared with POLR1B/RPA2</note>
    </ligand>
</feature>
<feature type="binding site" evidence="3">
    <location>
        <position position="597"/>
    </location>
    <ligand>
        <name>Mg(2+)</name>
        <dbReference type="ChEBI" id="CHEBI:18420"/>
        <label>1</label>
        <note>catalytic</note>
    </ligand>
</feature>
<feature type="binding site" evidence="4">
    <location>
        <position position="597"/>
    </location>
    <ligand>
        <name>Mg(2+)</name>
        <dbReference type="ChEBI" id="CHEBI:18420"/>
        <label>2</label>
        <note>ligand shared with POLR1B/RPA2</note>
    </ligand>
</feature>
<feature type="binding site" evidence="3">
    <location>
        <position position="599"/>
    </location>
    <ligand>
        <name>Mg(2+)</name>
        <dbReference type="ChEBI" id="CHEBI:18420"/>
        <label>1</label>
        <note>catalytic</note>
    </ligand>
</feature>
<feature type="binding site" evidence="3">
    <location>
        <position position="599"/>
    </location>
    <ligand>
        <name>RNA</name>
        <dbReference type="ChEBI" id="CHEBI:33697"/>
    </ligand>
</feature>
<feature type="binding site" evidence="3">
    <location>
        <position position="1256"/>
    </location>
    <ligand>
        <name>DNA</name>
        <dbReference type="ChEBI" id="CHEBI:16991"/>
        <label>template strand</label>
    </ligand>
</feature>
<feature type="site" description="NTP recognition and base pairing" evidence="3">
    <location>
        <position position="561"/>
    </location>
</feature>
<feature type="site" description="NTP recognition and base pairing" evidence="3">
    <location>
        <position position="805"/>
    </location>
</feature>
<evidence type="ECO:0000250" key="1">
    <source>
        <dbReference type="UniProtKB" id="G3MZY8"/>
    </source>
</evidence>
<evidence type="ECO:0000250" key="2">
    <source>
        <dbReference type="UniProtKB" id="O35134"/>
    </source>
</evidence>
<evidence type="ECO:0000250" key="3">
    <source>
        <dbReference type="UniProtKB" id="O95602"/>
    </source>
</evidence>
<evidence type="ECO:0000250" key="4">
    <source>
        <dbReference type="UniProtKB" id="P04050"/>
    </source>
</evidence>
<evidence type="ECO:0000250" key="5">
    <source>
        <dbReference type="UniProtKB" id="P10964"/>
    </source>
</evidence>
<evidence type="ECO:0000250" key="6">
    <source>
        <dbReference type="UniProtKB" id="P24928"/>
    </source>
</evidence>
<evidence type="ECO:0000256" key="7">
    <source>
        <dbReference type="SAM" id="MobiDB-lite"/>
    </source>
</evidence>
<evidence type="ECO:0000269" key="8">
    <source>
    </source>
</evidence>
<evidence type="ECO:0000303" key="9">
    <source>
    </source>
</evidence>
<evidence type="ECO:0000305" key="10"/>
<evidence type="ECO:0000312" key="11">
    <source>
        <dbReference type="RGD" id="620824"/>
    </source>
</evidence>
<comment type="function">
    <text evidence="3 5">Catalytic core component of RNA polymerase I (Pol I), a DNA-dependent RNA polymerase which synthesizes ribosomal RNA precursors using the four ribonucleoside triphosphates as substrates. Transcribes 47S pre-rRNAs from multicopy rRNA gene clusters, giving rise to 5.8S, 18S and 28S ribosomal RNAs (By similarity). Pol I-mediated transcription cycle proceeds through transcription initiation, transcription elongation and transcription termination stages. During transcription initiation, Pol I pre-initiation complex (PIC) is recruited by the selectivity factor 1 (SL1/TIF-IB) complex bound to the core promoter that precedes an rDNA repeat unit. The PIC assembly bends the promoter favoring the formation of the transcription bubble and promoter escape. Once the polymerase has escaped from the promoter it enters the elongation phase during which RNA is actively polymerized, based on complementarity with the template DNA strand. Highly processive, assembles in structures referred to as 'Miller trees' where many elongating Pol I complexes queue and transcribe the same rDNA coding regions. At terminator sequences downstream of the rDNA gene, PTRF interacts with Pol I and halts Pol I transcription leading to the release of the RNA transcript and polymerase from the DNA (By similarity). Forms Pol I active center together with the second largest subunit POLR1B/RPA2. Appends one nucleotide at a time to the 3' end of the nascent RNA, with POLR1A/RPA1 contributing a Mg(2+)-coordinating DxDGD motif, and POLR1B/RPA2 participating in the coordination of a second Mg(2+) ion and providing lysine residues believed to facilitate Watson-Crick base pairing between the incoming nucleotide and the template base. Typically, Mg(2+) ions direct a 5' nucleoside triphosphate to form a phosphodiester bond with the 3' hydroxyl of the preceding nucleotide of the nascent RNA, with the elimination of pyrophosphate. Has proofreading activity: Pauses and backtracks to allow the cleavage of a missincorporated nucleotide via POLR1H/RPA12. High Pol I processivity is associated with decreased transcription fidelity (By similarity).</text>
</comment>
<comment type="catalytic activity">
    <reaction evidence="3">
        <text>RNA(n) + a ribonucleoside 5'-triphosphate = RNA(n+1) + diphosphate</text>
        <dbReference type="Rhea" id="RHEA:21248"/>
        <dbReference type="Rhea" id="RHEA-COMP:14527"/>
        <dbReference type="Rhea" id="RHEA-COMP:17342"/>
        <dbReference type="ChEBI" id="CHEBI:33019"/>
        <dbReference type="ChEBI" id="CHEBI:61557"/>
        <dbReference type="ChEBI" id="CHEBI:140395"/>
        <dbReference type="EC" id="2.7.7.6"/>
    </reaction>
    <physiologicalReaction direction="left-to-right" evidence="3">
        <dbReference type="Rhea" id="RHEA:21249"/>
    </physiologicalReaction>
</comment>
<comment type="cofactor">
    <cofactor evidence="3">
        <name>Mg(2+)</name>
        <dbReference type="ChEBI" id="CHEBI:18420"/>
    </cofactor>
    <text evidence="3">Two Mg(2+) ions are coordinated by both the catalytic residues and the nucleic acid substrate to enhance substrate recognition and catalytic efficiency.</text>
</comment>
<comment type="subunit">
    <text evidence="2 3">Component of the RNA polymerase I (Pol I) complex consisting of 13 subunits: a ten-subunit catalytic core composed of POLR1A/RPA1, POLR1B/RPA2, POLR1C/RPAC1, POLR1D/RPAC2, POLR1H/RPA12, POLR2E/RPABC1, POLR2F/RPABC2, POLR2H/RPABC3, POLR2K/RPABC4 and POLR2L/RPABC5; a mobile stalk subunit POLR1F/RPA43 protruding from the core and additional subunits homologous to general transcription factors POLR1E/RPA49 and POLR1G/RPA34. Part of Pol I pre-initiation complex (PIC), in which Pol I core assembles with RRN3 and promoter-bound UTBF and SL1/TIF-IB complex. Interacts (via dock II domain) with TOP2A; this interaction may assist Pol I transcription initiation by releasing supercoils occurring during DNA unwinding (By similarity). Interacts with CAVIN1; this interaction induces the dissociation of Pol I complex paused at rDNA terminator sequences (By similarity). Interacts with MYO1C (By similarity). Interacts with ERBB2. Interacts with DDX11. Interacts with RECQL5 (By similarity).</text>
</comment>
<comment type="subcellular location">
    <subcellularLocation>
        <location evidence="3">Nucleus</location>
        <location evidence="3">Nucleolus</location>
    </subcellularLocation>
    <subcellularLocation>
        <location evidence="2">Chromosome</location>
    </subcellularLocation>
</comment>
<comment type="domain">
    <text evidence="3">The clamps form the DNA-binding cleft.</text>
</comment>
<comment type="domain">
    <text evidence="1 3">The bridging helix crosses the cleft near the catalytic site and is thought to promote polymerase translocation by acting as a ratchet that moves the DNA-RNA hybrid through the active site.</text>
</comment>
<comment type="domain">
    <text evidence="1">The trigger loop allows entry of NTPs into the active site, switching between an open and closed state with each NTP addition cycle.</text>
</comment>
<comment type="domain">
    <text evidence="3">The funnel accommodates POLR1H/RPA12 favoring mismatched RNA cleavage upon backtracking.</text>
</comment>
<comment type="domain">
    <text evidence="3">The high mobility group-like domain (dock II; residues 1060-1155) binds TOP2A, but cannot bind DNA; may assist Pol I initiation by releasing supercoils occurring during DNA unwinding.</text>
</comment>
<comment type="PTM">
    <text evidence="8">Phosphorylated.</text>
</comment>
<comment type="similarity">
    <text evidence="10">Belongs to the RNA polymerase beta' chain family.</text>
</comment>
<keyword id="KW-0158">Chromosome</keyword>
<keyword id="KW-0240">DNA-directed RNA polymerase</keyword>
<keyword id="KW-0460">Magnesium</keyword>
<keyword id="KW-0479">Metal-binding</keyword>
<keyword id="KW-0548">Nucleotidyltransferase</keyword>
<keyword id="KW-0539">Nucleus</keyword>
<keyword id="KW-0597">Phosphoprotein</keyword>
<keyword id="KW-1185">Reference proteome</keyword>
<keyword id="KW-0804">Transcription</keyword>
<keyword id="KW-0808">Transferase</keyword>
<keyword id="KW-0862">Zinc</keyword>
<protein>
    <recommendedName>
        <fullName>DNA-directed RNA polymerase I subunit RPA1</fullName>
        <shortName>RNA polymerase I subunit A1</shortName>
        <ecNumber evidence="3">2.7.7.6</ecNumber>
    </recommendedName>
    <alternativeName>
        <fullName>DNA-directed RNA polymerase I largest subunit</fullName>
    </alternativeName>
    <alternativeName>
        <fullName>DNA-directed RNA polymerase I subunit A</fullName>
    </alternativeName>
    <alternativeName>
        <fullName>RNA polymerase I 194 kDa subunit</fullName>
        <shortName evidence="9">A194</shortName>
        <shortName>RPA194</shortName>
    </alternativeName>
</protein>
<sequence>MLASKHTPWRRLQGISFGMYSAEELKKLSVKSITNPRYVDSLGNPSADGLYDLALGPADSKEVCSTCVQDFNNCSGHLGHIDLPLTVYNPLLFDKLYLLLRGSCLNCHMLTCPRAAIHLLVCQLKVLDVGALQAVYELERILSRFLEETSDPSAFEIQEELEEYTSKILQNNLLGSQGAHVKNVCESRSKLVAHFWKTHMAAKRCPHCKTGRSVVRKEHNSKLTITYPAMVHKKSGQKDAELPEGAPAAPGIDEAQMGKRGYLTPSSAQEHLFAIWKNEGFFLNYLFSGLDDIGPESSFNPSMFFLDFIVVPPSRYRPINRLGDQMFTNGQTVNLQAVMKDAVLIRKLLAVMAQEQKLPCEMTEITIDKENDSSGAIDRSFLSLLPGQSLTDKLYNIWIRLQSHVNIVFDSDMDKLMLEKYPGIRQILEKKEGLFRKHMMGKRVDYAARSVICPDMYINTNEIGIPMVFATKLTYPQPVTPWNVQELRQAVINGPNVHPGASMVINEDGSRTALSAVDATQREAVAKQLLTPSTGIPKPQGAKVVCRHVKNGDILLLNRQPTLHRPSIQAHRAHILPEEKVLRLHYANCKAYNADFDGDEMNAHFPQSELGRAEAYVLACTDQQYLVPKDGQPLAGLIQDHMVSGANMTIRGCFFTREQYMELVYRGLTDKVGRVKLFPPAILKPFPLWTGKQVVSTLLINIIPEDYTPLNLTGKAKIGSKAWVKEKPRPVPDFDPDSMCESQVIIREGELLCGVLDKAHYGSSAYGLVHCCYEIYGGETSGRVLTCLARLFTAYLQLYRGFTLGVEDILVKPNADVMRQRIIEESTQCGPRAVRAALNLPEAASCDEIQGKWQDAIWRKDQRDFNMIDMKFKEEVNHYSNEINKACMPFGLHRQFPENNLQMMVQSGAKGSTVNTMQISCLLGQIELEGRRPPLMASGKSLPCFEPYEFTPRAGGFVTGRFLTGIRPPEFFFHCMAGREGLVDTAVKTSRSGYLQRCIIKHLEGLVIQYDLTVRDSDGSVVQFLYGEDGLDIPKTQFLQPKQFPFLASNYEVIMKSKHLHEVLSRADPQKVLRHFRAIKKWHHRHSSALLRKGAFLSFSQKIQAAVKALNLEGKTQNGRSPETQQMLQMWHELDEQSRRKYQKRAAPCPDPSLSVWRPDIHFASVSETFEKKIDDYSQEWAAQAEKSHNRSELSLDRLRTLLQLKWQRSLCDPGEAVGLLAAQSIGEPSTQMTLNTFHFAGRGEMNVTLGIPRLREILMVASANIKTPMMSVPVFNTKKALRRVKSLKKQLTRVCLGEVLQKVDIQESFCMGEKQNKFRVYELRFQFLPHAYYQQEKCLRPEDILHFMETRFFKLLMEAIKKKNSKASAFRSVNTRRATQKDLDDTEDSGRNRREEERDEEEEGNIVDAEAEEGDADASDTKRKEKQEEEVDYESEEEGEEEEEEDVQEEENIKGEGAHQTHEPDEEEGSGLEEESSQNPPCRHSRPQGAEAMERRIQAVRESHSFIEDYQYDTEESLWCQVTVKLPLMKINFDMSSLVVSLAHNAIVYTTKGITRCLLNETINSKNEKEFVLNTEGINLPELFKYSEVLDLRRLYSNDIHAVANTYGIEAALRVIEKEIKDVFAVYGIAVDPRHLSLVADYMCFEGVYKPLNRFGIQSSSSPLQQMTFETSFQFLKQATMMGSHDELKSPSACLVVGKVVKGGTGLFELKQPLR</sequence>